<evidence type="ECO:0000255" key="1">
    <source>
        <dbReference type="HAMAP-Rule" id="MF_01530"/>
    </source>
</evidence>
<reference key="1">
    <citation type="journal article" date="2011" name="J. Bacteriol.">
        <title>Comparative genomics of 28 Salmonella enterica isolates: evidence for CRISPR-mediated adaptive sublineage evolution.</title>
        <authorList>
            <person name="Fricke W.F."/>
            <person name="Mammel M.K."/>
            <person name="McDermott P.F."/>
            <person name="Tartera C."/>
            <person name="White D.G."/>
            <person name="Leclerc J.E."/>
            <person name="Ravel J."/>
            <person name="Cebula T.A."/>
        </authorList>
    </citation>
    <scope>NUCLEOTIDE SEQUENCE [LARGE SCALE GENOMIC DNA]</scope>
    <source>
        <strain>SL476</strain>
    </source>
</reference>
<proteinExistence type="inferred from homology"/>
<accession>B4TAV4</accession>
<sequence>MKRFLLCSFALVLLYPAGIDMYLVGLPRIAADLNASEAQLHIAFSVYLAGMATAMLFAGKIADQSGRKPVAIVGALVFMMASLLCSRASEGSLFLSGRFLQGVGAGGCYVVAFAILRDTLDEHRRAKVLSLLNGITCIVPVLAPVVGHLIMLRFPWQSLFYTMSAMGIIVGLLSLFILRETRPARRAPRDLSRSSPAAESLVNRFFVSRLAITTLSVSVILTFVNASPVLLMEVMGFSRGDYAITMALTAGVSMVVSFSTPFALGLFKPRTLMLVSQGLFLTAGMTLSLAHTNTVTLFGLTLICAGFSVGFGVAMSQALGPFSLRAGVASSTLGIAQVCGSSLWIWLAAILGISAMNMLIGILIGCSIVSILLIFSVAPNRSVAEHEEIPYQSRS</sequence>
<comment type="subcellular location">
    <subcellularLocation>
        <location evidence="1">Cell inner membrane</location>
        <topology evidence="1">Multi-pass membrane protein</topology>
    </subcellularLocation>
</comment>
<comment type="similarity">
    <text evidence="1">Belongs to the major facilitator superfamily. DHA1 family. MdtL (TC 2.A.1.2.22) subfamily.</text>
</comment>
<feature type="chain" id="PRO_1000200829" description="Multidrug resistance protein MdtL">
    <location>
        <begin position="1"/>
        <end position="395"/>
    </location>
</feature>
<feature type="transmembrane region" description="Helical" evidence="1">
    <location>
        <begin position="4"/>
        <end position="24"/>
    </location>
</feature>
<feature type="transmembrane region" description="Helical" evidence="1">
    <location>
        <begin position="42"/>
        <end position="62"/>
    </location>
</feature>
<feature type="transmembrane region" description="Helical" evidence="1">
    <location>
        <begin position="69"/>
        <end position="89"/>
    </location>
</feature>
<feature type="transmembrane region" description="Helical" evidence="1">
    <location>
        <begin position="93"/>
        <end position="113"/>
    </location>
</feature>
<feature type="transmembrane region" description="Helical" evidence="1">
    <location>
        <begin position="131"/>
        <end position="151"/>
    </location>
</feature>
<feature type="transmembrane region" description="Helical" evidence="1">
    <location>
        <begin position="158"/>
        <end position="178"/>
    </location>
</feature>
<feature type="transmembrane region" description="Helical" evidence="1">
    <location>
        <begin position="217"/>
        <end position="237"/>
    </location>
</feature>
<feature type="transmembrane region" description="Helical" evidence="1">
    <location>
        <begin position="247"/>
        <end position="267"/>
    </location>
</feature>
<feature type="transmembrane region" description="Helical" evidence="1">
    <location>
        <begin position="271"/>
        <end position="291"/>
    </location>
</feature>
<feature type="transmembrane region" description="Helical" evidence="1">
    <location>
        <begin position="295"/>
        <end position="315"/>
    </location>
</feature>
<feature type="transmembrane region" description="Helical" evidence="1">
    <location>
        <begin position="333"/>
        <end position="353"/>
    </location>
</feature>
<feature type="transmembrane region" description="Helical" evidence="1">
    <location>
        <begin position="358"/>
        <end position="378"/>
    </location>
</feature>
<protein>
    <recommendedName>
        <fullName evidence="1">Multidrug resistance protein MdtL</fullName>
    </recommendedName>
</protein>
<name>MDTL_SALHS</name>
<gene>
    <name evidence="1" type="primary">mdtL</name>
    <name type="ordered locus">SeHA_C4178</name>
</gene>
<dbReference type="EMBL" id="CP001120">
    <property type="protein sequence ID" value="ACF66092.1"/>
    <property type="molecule type" value="Genomic_DNA"/>
</dbReference>
<dbReference type="RefSeq" id="WP_000819617.1">
    <property type="nucleotide sequence ID" value="NC_011083.1"/>
</dbReference>
<dbReference type="SMR" id="B4TAV4"/>
<dbReference type="KEGG" id="seh:SeHA_C4178"/>
<dbReference type="HOGENOM" id="CLU_001265_47_1_6"/>
<dbReference type="Proteomes" id="UP000001866">
    <property type="component" value="Chromosome"/>
</dbReference>
<dbReference type="GO" id="GO:0005886">
    <property type="term" value="C:plasma membrane"/>
    <property type="evidence" value="ECO:0007669"/>
    <property type="project" value="UniProtKB-SubCell"/>
</dbReference>
<dbReference type="GO" id="GO:0022857">
    <property type="term" value="F:transmembrane transporter activity"/>
    <property type="evidence" value="ECO:0007669"/>
    <property type="project" value="UniProtKB-UniRule"/>
</dbReference>
<dbReference type="CDD" id="cd17320">
    <property type="entry name" value="MFS_MdfA_MDR_like"/>
    <property type="match status" value="1"/>
</dbReference>
<dbReference type="FunFam" id="1.20.1720.10:FF:000003">
    <property type="entry name" value="Multidrug resistance protein MdtL"/>
    <property type="match status" value="1"/>
</dbReference>
<dbReference type="Gene3D" id="1.20.1720.10">
    <property type="entry name" value="Multidrug resistance protein D"/>
    <property type="match status" value="1"/>
</dbReference>
<dbReference type="HAMAP" id="MF_01530">
    <property type="entry name" value="MFS_MdtL"/>
    <property type="match status" value="1"/>
</dbReference>
<dbReference type="InterPro" id="IPR011701">
    <property type="entry name" value="MFS"/>
</dbReference>
<dbReference type="InterPro" id="IPR020846">
    <property type="entry name" value="MFS_dom"/>
</dbReference>
<dbReference type="InterPro" id="IPR036259">
    <property type="entry name" value="MFS_trans_sf"/>
</dbReference>
<dbReference type="InterPro" id="IPR023697">
    <property type="entry name" value="Multidrug-R_MdtL"/>
</dbReference>
<dbReference type="NCBIfam" id="NF007782">
    <property type="entry name" value="PRK10473.1"/>
    <property type="match status" value="1"/>
</dbReference>
<dbReference type="PANTHER" id="PTHR42718">
    <property type="entry name" value="MAJOR FACILITATOR SUPERFAMILY MULTIDRUG TRANSPORTER MFSC"/>
    <property type="match status" value="1"/>
</dbReference>
<dbReference type="PANTHER" id="PTHR42718:SF9">
    <property type="entry name" value="MAJOR FACILITATOR SUPERFAMILY MULTIDRUG TRANSPORTER MFSC"/>
    <property type="match status" value="1"/>
</dbReference>
<dbReference type="Pfam" id="PF07690">
    <property type="entry name" value="MFS_1"/>
    <property type="match status" value="1"/>
</dbReference>
<dbReference type="SUPFAM" id="SSF103473">
    <property type="entry name" value="MFS general substrate transporter"/>
    <property type="match status" value="1"/>
</dbReference>
<dbReference type="PROSITE" id="PS50850">
    <property type="entry name" value="MFS"/>
    <property type="match status" value="1"/>
</dbReference>
<organism>
    <name type="scientific">Salmonella heidelberg (strain SL476)</name>
    <dbReference type="NCBI Taxonomy" id="454169"/>
    <lineage>
        <taxon>Bacteria</taxon>
        <taxon>Pseudomonadati</taxon>
        <taxon>Pseudomonadota</taxon>
        <taxon>Gammaproteobacteria</taxon>
        <taxon>Enterobacterales</taxon>
        <taxon>Enterobacteriaceae</taxon>
        <taxon>Salmonella</taxon>
    </lineage>
</organism>
<keyword id="KW-0997">Cell inner membrane</keyword>
<keyword id="KW-1003">Cell membrane</keyword>
<keyword id="KW-0472">Membrane</keyword>
<keyword id="KW-0812">Transmembrane</keyword>
<keyword id="KW-1133">Transmembrane helix</keyword>
<keyword id="KW-0813">Transport</keyword>